<sequence length="56" mass="7430">RLSRRRVYSIGGRRRRRRRRSRGRRGRRRGRRRGRRRGRRRGRRRRRRRGGRRRRR</sequence>
<keyword id="KW-0158">Chromosome</keyword>
<keyword id="KW-0217">Developmental protein</keyword>
<keyword id="KW-0221">Differentiation</keyword>
<keyword id="KW-0903">Direct protein sequencing</keyword>
<keyword id="KW-0226">DNA condensation</keyword>
<keyword id="KW-0238">DNA-binding</keyword>
<keyword id="KW-0544">Nucleosome core</keyword>
<keyword id="KW-0539">Nucleus</keyword>
<keyword id="KW-0597">Phosphoprotein</keyword>
<keyword id="KW-1185">Reference proteome</keyword>
<keyword id="KW-0744">Spermatogenesis</keyword>
<evidence type="ECO:0000256" key="1">
    <source>
        <dbReference type="SAM" id="MobiDB-lite"/>
    </source>
</evidence>
<evidence type="ECO:0000269" key="2">
    <source>
    </source>
</evidence>
<evidence type="ECO:0000305" key="3"/>
<accession>P83214</accession>
<feature type="chain" id="PRO_0000025829" description="Sperm protamine P1">
    <location>
        <begin position="1"/>
        <end position="56"/>
    </location>
</feature>
<feature type="chain" id="PRO_0000025831" description="Sperm protamine P2">
    <location>
        <begin position="15"/>
        <end position="56"/>
    </location>
</feature>
<feature type="region of interest" description="Disordered" evidence="1">
    <location>
        <begin position="1"/>
        <end position="56"/>
    </location>
</feature>
<reference key="1">
    <citation type="journal article" date="2004" name="Mol. Reprod. Dev.">
        <title>Chromatin organization during spermiogenesis in Octopus vulgaris. II: DNA-interacting proteins.</title>
        <authorList>
            <person name="Gimenez-Bonafe P."/>
            <person name="Soler F.M."/>
            <person name="Buesa C."/>
            <person name="Sautiere P.-E."/>
            <person name="Ausio J."/>
            <person name="Kouach M."/>
            <person name="Kasinsky H.E."/>
            <person name="Chiva M."/>
        </authorList>
    </citation>
    <scope>PROTEIN SEQUENCE</scope>
    <scope>FUNCTION</scope>
    <scope>PHOSPHORYLATION</scope>
    <scope>MASS SPECTROMETRY</scope>
    <source>
        <tissue>Sperm</tissue>
    </source>
</reference>
<organism evidence="3">
    <name type="scientific">Octopus vulgaris</name>
    <name type="common">Common octopus</name>
    <dbReference type="NCBI Taxonomy" id="6645"/>
    <lineage>
        <taxon>Eukaryota</taxon>
        <taxon>Metazoa</taxon>
        <taxon>Spiralia</taxon>
        <taxon>Lophotrochozoa</taxon>
        <taxon>Mollusca</taxon>
        <taxon>Cephalopoda</taxon>
        <taxon>Coleoidea</taxon>
        <taxon>Octopodiformes</taxon>
        <taxon>Octopoda</taxon>
        <taxon>Incirrata</taxon>
        <taxon>Octopodidae</taxon>
        <taxon>Octopus</taxon>
    </lineage>
</organism>
<name>HSP1_OCTVU</name>
<comment type="function">
    <text evidence="2 3">Protamines substitute for histones in the chromatin of sperm during the haploid phase of spermatogenesis. They compact sperm DNA into a highly condensed, stable and inactive complex.</text>
</comment>
<comment type="function">
    <text evidence="2 3">Octopus spermiogenesis is characterized by a double nuclear protein transition: Histones are first replaced by P1, which allows the chromatin to adopt a shape that is not as relaxed as with histones. The majority of P1 is later replaced by P2, forming a compact chromatin. P2 is the main protamine of sperm.</text>
</comment>
<comment type="subcellular location">
    <subcellularLocation>
        <location>Nucleus</location>
    </subcellularLocation>
    <subcellularLocation>
        <location>Chromosome</location>
    </subcellularLocation>
</comment>
<comment type="tissue specificity">
    <text evidence="3">Testis.</text>
</comment>
<comment type="PTM">
    <text evidence="2">P2 is phosphorylated in immature sperm. It is dephosphorylated in mature sperm allowing a stronger interaction with DNA.</text>
</comment>
<comment type="mass spectrometry" mass="7428.0" method="Electrospray" evidence="2 3">
    <molecule>Sperm protamine P1</molecule>
</comment>
<comment type="mass spectrometry" mass="6028.0" method="Electrospray" evidence="2 3">
    <molecule>Sperm protamine P2</molecule>
</comment>
<protein>
    <recommendedName>
        <fullName>Sperm protamine P1</fullName>
        <shortName>Po1</shortName>
    </recommendedName>
    <component>
        <recommendedName>
            <fullName>Sperm protamine P2</fullName>
            <shortName>Po2</shortName>
        </recommendedName>
        <alternativeName>
            <fullName>Main protamine</fullName>
        </alternativeName>
    </component>
</protein>
<dbReference type="Proteomes" id="UP000515154">
    <property type="component" value="Unplaced"/>
</dbReference>
<dbReference type="GO" id="GO:0000786">
    <property type="term" value="C:nucleosome"/>
    <property type="evidence" value="ECO:0007669"/>
    <property type="project" value="UniProtKB-KW"/>
</dbReference>
<dbReference type="GO" id="GO:0005634">
    <property type="term" value="C:nucleus"/>
    <property type="evidence" value="ECO:0007669"/>
    <property type="project" value="UniProtKB-SubCell"/>
</dbReference>
<dbReference type="GO" id="GO:0003677">
    <property type="term" value="F:DNA binding"/>
    <property type="evidence" value="ECO:0007669"/>
    <property type="project" value="UniProtKB-KW"/>
</dbReference>
<dbReference type="GO" id="GO:0030154">
    <property type="term" value="P:cell differentiation"/>
    <property type="evidence" value="ECO:0007669"/>
    <property type="project" value="UniProtKB-KW"/>
</dbReference>
<dbReference type="GO" id="GO:0030261">
    <property type="term" value="P:chromosome condensation"/>
    <property type="evidence" value="ECO:0007669"/>
    <property type="project" value="UniProtKB-KW"/>
</dbReference>
<dbReference type="GO" id="GO:0007283">
    <property type="term" value="P:spermatogenesis"/>
    <property type="evidence" value="ECO:0007669"/>
    <property type="project" value="UniProtKB-KW"/>
</dbReference>
<proteinExistence type="evidence at protein level"/>